<evidence type="ECO:0000250" key="1">
    <source>
        <dbReference type="UniProtKB" id="C1ITJ8"/>
    </source>
</evidence>
<evidence type="ECO:0000250" key="2">
    <source>
        <dbReference type="UniProtKB" id="Q95460"/>
    </source>
</evidence>
<evidence type="ECO:0000255" key="3"/>
<evidence type="ECO:0000255" key="4">
    <source>
        <dbReference type="PROSITE-ProRule" id="PRU00114"/>
    </source>
</evidence>
<evidence type="ECO:0000303" key="5">
    <source>
    </source>
</evidence>
<evidence type="ECO:0000305" key="6"/>
<accession>Q9BD50</accession>
<accession>Q95M21</accession>
<accession>Q9BD49</accession>
<sequence>MGELMAFLLPLIIVLMVKHSNSRTHSLRYFRLGVSDPIRGVPEFISVGYVDSHPITTYDSVTQQKEPRAPWMAENLAPDHWERYTQLLRGWQQMFKVELKRLQRHYNHSGSHTYQRMIGCELLEDGSTTGFLQYAYDGQDFLIFNKDTLSWLAVDNVAHTIKRAWEANQHELQYQKNWLEEECIAWLKRFLEYGKDTLQRTEPPLVRVNRKETFPGVTTLFCKAHGFYPPEIYMTWMKNGEEIVQEMDYGDILPSGDGTYQTWASFELDPQSSNLYSCHVEHCGVHMVLQVPQESEAIPLVMKAVSGSIVFVIVLTGVGVLVWRRRPREQNGAVYLPTPD</sequence>
<dbReference type="EMBL" id="AJ271828">
    <property type="protein sequence ID" value="CAC28215.1"/>
    <property type="molecule type" value="mRNA"/>
</dbReference>
<dbReference type="EMBL" id="AJ271829">
    <property type="protein sequence ID" value="CAC28216.1"/>
    <property type="molecule type" value="mRNA"/>
</dbReference>
<dbReference type="EMBL" id="AJ315656">
    <property type="protein sequence ID" value="CAC42232.1"/>
    <property type="molecule type" value="Genomic_DNA"/>
</dbReference>
<dbReference type="SMR" id="Q9BD50"/>
<dbReference type="GlyCosmos" id="Q9BD50">
    <property type="glycosylation" value="1 site, No reported glycans"/>
</dbReference>
<dbReference type="GO" id="GO:0031901">
    <property type="term" value="C:early endosome membrane"/>
    <property type="evidence" value="ECO:0007669"/>
    <property type="project" value="UniProtKB-SubCell"/>
</dbReference>
<dbReference type="GO" id="GO:0005789">
    <property type="term" value="C:endoplasmic reticulum membrane"/>
    <property type="evidence" value="ECO:0007669"/>
    <property type="project" value="UniProtKB-SubCell"/>
</dbReference>
<dbReference type="GO" id="GO:0009897">
    <property type="term" value="C:external side of plasma membrane"/>
    <property type="evidence" value="ECO:0007669"/>
    <property type="project" value="TreeGrafter"/>
</dbReference>
<dbReference type="GO" id="GO:0005615">
    <property type="term" value="C:extracellular space"/>
    <property type="evidence" value="ECO:0007669"/>
    <property type="project" value="TreeGrafter"/>
</dbReference>
<dbReference type="GO" id="GO:0000139">
    <property type="term" value="C:Golgi membrane"/>
    <property type="evidence" value="ECO:0007669"/>
    <property type="project" value="UniProtKB-SubCell"/>
</dbReference>
<dbReference type="GO" id="GO:0031902">
    <property type="term" value="C:late endosome membrane"/>
    <property type="evidence" value="ECO:0007669"/>
    <property type="project" value="UniProtKB-SubCell"/>
</dbReference>
<dbReference type="GO" id="GO:0042612">
    <property type="term" value="C:MHC class I protein complex"/>
    <property type="evidence" value="ECO:0007669"/>
    <property type="project" value="UniProtKB-KW"/>
</dbReference>
<dbReference type="GO" id="GO:0002474">
    <property type="term" value="P:antigen processing and presentation of peptide antigen via MHC class I"/>
    <property type="evidence" value="ECO:0007669"/>
    <property type="project" value="UniProtKB-KW"/>
</dbReference>
<dbReference type="GO" id="GO:0045087">
    <property type="term" value="P:innate immune response"/>
    <property type="evidence" value="ECO:0007669"/>
    <property type="project" value="UniProtKB-KW"/>
</dbReference>
<dbReference type="CDD" id="cd07698">
    <property type="entry name" value="IgC1_MHC_I_alpha3"/>
    <property type="match status" value="1"/>
</dbReference>
<dbReference type="FunFam" id="3.30.500.10:FF:000001">
    <property type="entry name" value="H-2 class I histocompatibility antigen, alpha chain"/>
    <property type="match status" value="1"/>
</dbReference>
<dbReference type="FunFam" id="2.60.40.10:FF:000204">
    <property type="entry name" value="Major histocompatibility complex, class I-related protein"/>
    <property type="match status" value="1"/>
</dbReference>
<dbReference type="Gene3D" id="2.60.40.10">
    <property type="entry name" value="Immunoglobulins"/>
    <property type="match status" value="1"/>
</dbReference>
<dbReference type="Gene3D" id="3.30.500.10">
    <property type="entry name" value="MHC class I-like antigen recognition-like"/>
    <property type="match status" value="1"/>
</dbReference>
<dbReference type="InterPro" id="IPR007110">
    <property type="entry name" value="Ig-like_dom"/>
</dbReference>
<dbReference type="InterPro" id="IPR036179">
    <property type="entry name" value="Ig-like_dom_sf"/>
</dbReference>
<dbReference type="InterPro" id="IPR013783">
    <property type="entry name" value="Ig-like_fold"/>
</dbReference>
<dbReference type="InterPro" id="IPR003006">
    <property type="entry name" value="Ig/MHC_CS"/>
</dbReference>
<dbReference type="InterPro" id="IPR003597">
    <property type="entry name" value="Ig_C1-set"/>
</dbReference>
<dbReference type="InterPro" id="IPR050208">
    <property type="entry name" value="MHC_class-I_related"/>
</dbReference>
<dbReference type="InterPro" id="IPR011161">
    <property type="entry name" value="MHC_I-like_Ag-recog"/>
</dbReference>
<dbReference type="InterPro" id="IPR037055">
    <property type="entry name" value="MHC_I-like_Ag-recog_sf"/>
</dbReference>
<dbReference type="InterPro" id="IPR011162">
    <property type="entry name" value="MHC_I/II-like_Ag-recog"/>
</dbReference>
<dbReference type="InterPro" id="IPR001039">
    <property type="entry name" value="MHC_I_a_a1/a2"/>
</dbReference>
<dbReference type="PANTHER" id="PTHR16675:SF242">
    <property type="entry name" value="MAJOR HISTOCOMPATIBILITY COMPLEX CLASS I-RELATED GENE PROTEIN"/>
    <property type="match status" value="1"/>
</dbReference>
<dbReference type="PANTHER" id="PTHR16675">
    <property type="entry name" value="MHC CLASS I-RELATED"/>
    <property type="match status" value="1"/>
</dbReference>
<dbReference type="Pfam" id="PF07654">
    <property type="entry name" value="C1-set"/>
    <property type="match status" value="1"/>
</dbReference>
<dbReference type="Pfam" id="PF00129">
    <property type="entry name" value="MHC_I"/>
    <property type="match status" value="1"/>
</dbReference>
<dbReference type="PRINTS" id="PR01638">
    <property type="entry name" value="MHCCLASSI"/>
</dbReference>
<dbReference type="SMART" id="SM00407">
    <property type="entry name" value="IGc1"/>
    <property type="match status" value="1"/>
</dbReference>
<dbReference type="SUPFAM" id="SSF48726">
    <property type="entry name" value="Immunoglobulin"/>
    <property type="match status" value="1"/>
</dbReference>
<dbReference type="SUPFAM" id="SSF54452">
    <property type="entry name" value="MHC antigen-recognition domain"/>
    <property type="match status" value="1"/>
</dbReference>
<dbReference type="PROSITE" id="PS50835">
    <property type="entry name" value="IG_LIKE"/>
    <property type="match status" value="1"/>
</dbReference>
<dbReference type="PROSITE" id="PS00290">
    <property type="entry name" value="IG_MHC"/>
    <property type="match status" value="1"/>
</dbReference>
<proteinExistence type="evidence at transcript level"/>
<feature type="signal peptide" evidence="3">
    <location>
        <begin position="1"/>
        <end position="22"/>
    </location>
</feature>
<feature type="chain" id="PRO_0000344445" description="Major histocompatibility complex class I-related gene protein">
    <location>
        <begin position="23"/>
        <end position="340"/>
    </location>
</feature>
<feature type="topological domain" description="Extracellular" evidence="3">
    <location>
        <begin position="23"/>
        <end position="302"/>
    </location>
</feature>
<feature type="transmembrane region" description="Helical" evidence="3">
    <location>
        <begin position="303"/>
        <end position="323"/>
    </location>
</feature>
<feature type="topological domain" description="Cytoplasmic" evidence="3">
    <location>
        <begin position="324"/>
        <end position="340"/>
    </location>
</feature>
<feature type="domain" description="Ig-like C1-type" evidence="4">
    <location>
        <begin position="203"/>
        <end position="282"/>
    </location>
</feature>
<feature type="region of interest" description="Antigen-binding cleft" evidence="2">
    <location>
        <begin position="23"/>
        <end position="201"/>
    </location>
</feature>
<feature type="region of interest" description="Alpha-1" evidence="3">
    <location>
        <begin position="23"/>
        <end position="109"/>
    </location>
</feature>
<feature type="region of interest" description="Alpha-2" evidence="3">
    <location>
        <begin position="110"/>
        <end position="201"/>
    </location>
</feature>
<feature type="region of interest" description="Alpha-3" evidence="3">
    <location>
        <begin position="202"/>
        <end position="293"/>
    </location>
</feature>
<feature type="region of interest" description="Connecting peptide" evidence="3">
    <location>
        <begin position="294"/>
        <end position="302"/>
    </location>
</feature>
<feature type="binding site" evidence="2">
    <location>
        <position position="29"/>
    </location>
    <ligand>
        <name>8-(9H-purin-6-yl)-2-oxa-8-azabicyclo[3.3.1]nona-3,6-diene-4,6-dicarbaldehyde</name>
        <dbReference type="ChEBI" id="CHEBI:233180"/>
    </ligand>
</feature>
<feature type="binding site" evidence="2">
    <location>
        <position position="31"/>
    </location>
    <ligand>
        <name>5-(2-oxoethylideneamino)-6-(D-ribitylamino)uracil</name>
        <dbReference type="ChEBI" id="CHEBI:78397"/>
        <note>pathogen-derived metabolite antigen</note>
    </ligand>
</feature>
<feature type="binding site" evidence="2">
    <location>
        <position position="31"/>
    </location>
    <ligand>
        <name>5-(2-oxopropylideneamino)-6-(D-ribitylamino)uracil</name>
        <dbReference type="ChEBI" id="CHEBI:78398"/>
        <note>pathogen-derived metabolite antigen</note>
    </ligand>
</feature>
<feature type="binding site" evidence="2">
    <location>
        <position position="31"/>
    </location>
    <ligand>
        <name>7-hydroxy-6-methyl-8-(1-D-ribityl)lumazine</name>
        <dbReference type="ChEBI" id="CHEBI:233481"/>
        <note>pathogen-derived metabolite antigen</note>
    </ligand>
</feature>
<feature type="binding site" evidence="2">
    <location>
        <position position="31"/>
    </location>
    <ligand>
        <name>8-(9H-purin-6-yl)-2-oxa-8-azabicyclo[3.3.1]nona-3,6-diene-4,6-dicarbaldehyde</name>
        <dbReference type="ChEBI" id="CHEBI:233180"/>
    </ligand>
</feature>
<feature type="binding site" evidence="2">
    <location>
        <position position="46"/>
    </location>
    <ligand>
        <name>5-(2-oxoethylideneamino)-6-(D-ribitylamino)uracil</name>
        <dbReference type="ChEBI" id="CHEBI:78397"/>
        <note>pathogen-derived metabolite antigen</note>
    </ligand>
</feature>
<feature type="binding site" evidence="2">
    <location>
        <position position="46"/>
    </location>
    <ligand>
        <name>5-(2-oxopropylideneamino)-6-(D-ribitylamino)uracil</name>
        <dbReference type="ChEBI" id="CHEBI:78398"/>
        <note>pathogen-derived metabolite antigen</note>
    </ligand>
</feature>
<feature type="binding site" evidence="2">
    <location>
        <position position="46"/>
    </location>
    <ligand>
        <name>7-hydroxy-6-methyl-8-(1-D-ribityl)lumazine</name>
        <dbReference type="ChEBI" id="CHEBI:233481"/>
        <note>pathogen-derived metabolite antigen</note>
    </ligand>
</feature>
<feature type="binding site" description="covalent" evidence="2">
    <location>
        <position position="65"/>
    </location>
    <ligand>
        <name>2-amino-4-oxopteridine-6-carbaldehyde</name>
        <dbReference type="ChEBI" id="CHEBI:70981"/>
    </ligand>
</feature>
<feature type="binding site" description="covalent" evidence="2">
    <location>
        <position position="65"/>
    </location>
    <ligand>
        <name>5-(2-oxoethylideneamino)-6-(D-ribitylamino)uracil</name>
        <dbReference type="ChEBI" id="CHEBI:78397"/>
        <note>pathogen-derived metabolite antigen</note>
    </ligand>
</feature>
<feature type="binding site" description="covalent" evidence="2">
    <location>
        <position position="65"/>
    </location>
    <ligand>
        <name>5-(2-oxopropylideneamino)-6-(D-ribitylamino)uracil</name>
        <dbReference type="ChEBI" id="CHEBI:78398"/>
        <note>pathogen-derived metabolite antigen</note>
    </ligand>
</feature>
<feature type="binding site" evidence="2">
    <location>
        <position position="65"/>
    </location>
    <ligand>
        <name>7-hydroxy-6-methyl-8-(1-D-ribityl)lumazine</name>
        <dbReference type="ChEBI" id="CHEBI:233481"/>
        <note>pathogen-derived metabolite antigen</note>
    </ligand>
</feature>
<feature type="binding site" description="covalent" evidence="2">
    <location>
        <position position="65"/>
    </location>
    <ligand>
        <name>8-(9H-purin-6-yl)-2-oxa-8-azabicyclo[3.3.1]nona-3,6-diene-4,6-dicarbaldehyde</name>
        <dbReference type="ChEBI" id="CHEBI:233180"/>
    </ligand>
</feature>
<feature type="binding site" description="covalent" evidence="2">
    <location>
        <position position="65"/>
    </location>
    <ligand>
        <name>pyridoxal</name>
        <dbReference type="ChEBI" id="CHEBI:17310"/>
    </ligand>
</feature>
<feature type="binding site" evidence="2">
    <location>
        <position position="80"/>
    </location>
    <ligand>
        <name>8-(9H-purin-6-yl)-2-oxa-8-azabicyclo[3.3.1]nona-3,6-diene-4,6-dicarbaldehyde</name>
        <dbReference type="ChEBI" id="CHEBI:233180"/>
    </ligand>
</feature>
<feature type="binding site" evidence="2">
    <location>
        <position position="116"/>
    </location>
    <ligand>
        <name>5-(2-oxoethylideneamino)-6-(D-ribitylamino)uracil</name>
        <dbReference type="ChEBI" id="CHEBI:78397"/>
        <note>pathogen-derived metabolite antigen</note>
    </ligand>
</feature>
<feature type="binding site" evidence="2">
    <location>
        <position position="116"/>
    </location>
    <ligand>
        <name>5-(2-oxopropylideneamino)-6-(D-ribitylamino)uracil</name>
        <dbReference type="ChEBI" id="CHEBI:78398"/>
        <note>pathogen-derived metabolite antigen</note>
    </ligand>
</feature>
<feature type="binding site" evidence="2">
    <location>
        <position position="116"/>
    </location>
    <ligand>
        <name>7-hydroxy-6-methyl-8-(1-D-ribityl)lumazine</name>
        <dbReference type="ChEBI" id="CHEBI:233481"/>
        <note>pathogen-derived metabolite antigen</note>
    </ligand>
</feature>
<feature type="binding site" evidence="2">
    <location>
        <position position="116"/>
    </location>
    <ligand>
        <name>8-(9H-purin-6-yl)-2-oxa-8-azabicyclo[3.3.1]nona-3,6-diene-4,6-dicarbaldehyde</name>
        <dbReference type="ChEBI" id="CHEBI:233180"/>
    </ligand>
</feature>
<feature type="binding site" evidence="2">
    <location>
        <position position="174"/>
    </location>
    <ligand>
        <name>5-(2-oxoethylideneamino)-6-(D-ribitylamino)uracil</name>
        <dbReference type="ChEBI" id="CHEBI:78397"/>
        <note>pathogen-derived metabolite antigen</note>
    </ligand>
</feature>
<feature type="binding site" evidence="2">
    <location>
        <position position="174"/>
    </location>
    <ligand>
        <name>5-(2-oxopropylideneamino)-6-(D-ribitylamino)uracil</name>
        <dbReference type="ChEBI" id="CHEBI:78398"/>
        <note>pathogen-derived metabolite antigen</note>
    </ligand>
</feature>
<feature type="binding site" evidence="2">
    <location>
        <position position="174"/>
    </location>
    <ligand>
        <name>7-hydroxy-6-methyl-8-(1-D-ribityl)lumazine</name>
        <dbReference type="ChEBI" id="CHEBI:233481"/>
        <note>pathogen-derived metabolite antigen</note>
    </ligand>
</feature>
<feature type="binding site" evidence="2">
    <location>
        <position position="175"/>
    </location>
    <ligand>
        <name>5-(2-oxoethylideneamino)-6-(D-ribitylamino)uracil</name>
        <dbReference type="ChEBI" id="CHEBI:78397"/>
        <note>pathogen-derived metabolite antigen</note>
    </ligand>
</feature>
<feature type="binding site" evidence="2">
    <location>
        <position position="175"/>
    </location>
    <ligand>
        <name>5-(2-oxopropylideneamino)-6-(D-ribitylamino)uracil</name>
        <dbReference type="ChEBI" id="CHEBI:78398"/>
        <note>pathogen-derived metabolite antigen</note>
    </ligand>
</feature>
<feature type="binding site" evidence="2">
    <location>
        <position position="175"/>
    </location>
    <ligand>
        <name>7-hydroxy-6-methyl-8-(1-D-ribityl)lumazine</name>
        <dbReference type="ChEBI" id="CHEBI:233481"/>
        <note>pathogen-derived metabolite antigen</note>
    </ligand>
</feature>
<feature type="glycosylation site" description="N-linked (GlcNAc...) asparagine" evidence="3">
    <location>
        <position position="107"/>
    </location>
</feature>
<feature type="disulfide bond" evidence="4">
    <location>
        <begin position="120"/>
        <end position="183"/>
    </location>
</feature>
<feature type="disulfide bond" evidence="4">
    <location>
        <begin position="222"/>
        <end position="278"/>
    </location>
</feature>
<feature type="splice variant" id="VSP_034761" description="In isoform 2." evidence="5">
    <location>
        <begin position="203"/>
        <end position="294"/>
    </location>
</feature>
<feature type="sequence conflict" description="In Ref. 1; CAC42232." evidence="6" ref="1">
    <original>Q</original>
    <variation>R</variation>
    <location>
        <position position="63"/>
    </location>
</feature>
<feature type="sequence conflict" description="In Ref. 1; CAC42232." evidence="6" ref="1">
    <original>R</original>
    <variation>Q</variation>
    <location>
        <position position="163"/>
    </location>
</feature>
<feature type="sequence conflict" description="In Ref. 1; CAC42232." evidence="6" ref="1">
    <original>Q</original>
    <variation>L</variation>
    <location>
        <position position="173"/>
    </location>
</feature>
<keyword id="KW-0025">Alternative splicing</keyword>
<keyword id="KW-1003">Cell membrane</keyword>
<keyword id="KW-1015">Disulfide bond</keyword>
<keyword id="KW-0256">Endoplasmic reticulum</keyword>
<keyword id="KW-0967">Endosome</keyword>
<keyword id="KW-0325">Glycoprotein</keyword>
<keyword id="KW-0333">Golgi apparatus</keyword>
<keyword id="KW-0391">Immunity</keyword>
<keyword id="KW-0393">Immunoglobulin domain</keyword>
<keyword id="KW-0399">Innate immunity</keyword>
<keyword id="KW-0472">Membrane</keyword>
<keyword id="KW-0490">MHC I</keyword>
<keyword id="KW-0732">Signal</keyword>
<keyword id="KW-0812">Transmembrane</keyword>
<keyword id="KW-1133">Transmembrane helix</keyword>
<protein>
    <recommendedName>
        <fullName>Major histocompatibility complex class I-related gene protein</fullName>
    </recommendedName>
    <alternativeName>
        <fullName>MHC class I-related gene protein</fullName>
    </alternativeName>
</protein>
<name>HMR1_PONPY</name>
<comment type="function">
    <text evidence="2">Antigen-presenting molecule specialized in displaying microbial pyrimidine-based metabolites to alpha-beta T cell receptors (TCR) on innate-type mucosal-associated invariant T (MAIT) cells. In complex with B2M preferentially presents riboflavin-derived metabolites to semi-invariant TCRs on MAIT cells, guiding immune surveillance of the microbial metabolome at mucosal epithelial barriers. Signature pyrimidine-based microbial antigens are generated via non-enzymatic condensation of metabolite intermediates of the riboflavin pathway with by-products arising from other metabolic pathways such as glycolysis. Typical potent antigenic metabolites are 5-(2-oxoethylideneamino)-6-D-ribitylaminouracil (5-OE-RU) and 5-(2-oxopropylideneamino)-6-D-ribitylaminouracil (5-OP-RU), products of condensation of 5-amino-6-D-ribityaminouracil (5-A-RU) with glyoxal or methylglyoxal by-products, respectively. May present microbial antigens to various MAIT cell subsets, providing for unique recognition of diverse microbes, including pathogens that do not synthesize riboflavin. Upon antigen recognition, elicits rapid innate-type MAIT cell activation to eliminate pathogenic microbes by directly killing infected cells. During T cell development, drives thymic selection and post-thymic terminal differentiation of MAIT cells in a process dependent on commensal microflora. Acts as an immune sensor of cancer cell metabolome. May present a tumor-specific or -associated metabolite essential for cancer cell survival to a pan-cancer TCR on a non-MAIT CD8-positive T cell clone, triggering T cell-mediated killing of a wide range of cancer cell types. May present tumor-enriched pyridoxal and pyridoxal 5'-phosphate antigens, enabling preferential recognition of cancer cells. Presents nucleobase carbonyl adducts generated during oxidative stress. Captures M3Ade, a nucleobase adduct composed of one adenine modified by a malondialdehyde trimer, for recognition by MR1-restricted T cell clones expressing a polyclonal TCR repertoire.</text>
</comment>
<comment type="subunit">
    <text evidence="1 2">Heterotrimer that consists of MR1, B2M and metabolite antigen. Major classes of metabolite ligands presented by MR1 include riboflavin-related antigens, pyrimidines and ribityl lumazines, nucleobase adducts and folate derivatives. Forms reversible covalent Schiff base complexes with microbial pyrimidine-based metabolite, which serves as a molecular switch triggering complete folding, stable association with B2M and translocation of the ternary complex from endoplasmic reticulum to the plasma membrane. Alternatively, forms non-Schiff base complexes with ribityl lumazines. On antigen-presenting cells, the ternary complex interacts with TCR on MR1-restricted T cells. Interacts with TAPBP and TAPBPL chaperones in the endoplasmic reticulum. TAPBP associated or not with MHC class I peptide loading complex binds ligand-free MR1 or MR1-B2M complex, providing for stable MR1 pools ready for metabolite antigen processing. TAPBPL interacts with MR1 in a ligand-independent way; this interaction may stabilize MR1 pool and facilitate ligand loading and dissociation. Structurally, MR1-B2M heterodimer adopts a topology similar to classical MHC class I molecules, with alpha-1 and alpha-2 domains of MR1 forming the antigen-binding cleft composed of two alpha-helices resting on a floor of 7-stranded anti-parallel beta-pleated sheet (By similarity). MR1-B2M heterodimer (via alpha-helices) interacts with TCR (via CDR domains) (By similarity).</text>
</comment>
<comment type="subcellular location">
    <subcellularLocation>
        <location evidence="1">Cell membrane</location>
        <topology evidence="2">Single-pass type I membrane protein</topology>
    </subcellularLocation>
    <subcellularLocation>
        <location evidence="2">Endoplasmic reticulum membrane</location>
        <topology evidence="3">Single-pass type I membrane protein</topology>
    </subcellularLocation>
    <subcellularLocation>
        <location evidence="2">Golgi apparatus membrane</location>
        <topology evidence="3">Single-pass type I membrane protein</topology>
    </subcellularLocation>
    <subcellularLocation>
        <location evidence="2">Early endosome membrane</location>
        <topology evidence="3">Single-pass type I membrane protein</topology>
    </subcellularLocation>
    <subcellularLocation>
        <location evidence="2">Late endosome membrane</location>
        <topology evidence="3">Single-pass type I membrane protein</topology>
    </subcellularLocation>
    <text evidence="2">In the absence of antigen remains within the endoplasmic reticulum where it acts as a metabolite sensor. Antigen binding triggers trafficking of the ternary complex to the plasma membrane. After presentation, most of these complexes are rapidly internalized and degraded via endocytosis. A small subset recycles via endosomes back to the plasma membrane and may thus acquire and present new antigens that do not efficiently reach the endoplasmic reticulum.</text>
</comment>
<comment type="alternative products">
    <event type="alternative splicing"/>
    <isoform>
        <id>Q9BD50-1</id>
        <name>1</name>
        <name>MR1</name>
        <sequence type="displayed"/>
    </isoform>
    <isoform>
        <id>Q9BD50-2</id>
        <name>2</name>
        <name>MR1B2</name>
        <sequence type="described" ref="VSP_034761"/>
    </isoform>
</comment>
<comment type="domain">
    <text evidence="2">The alpha-1 domain is a structural part of antigen-binding cleft.</text>
</comment>
<comment type="domain">
    <text evidence="2">The alpha-2 domain is a structural part of antigen-binding cleft.</text>
</comment>
<comment type="PTM">
    <text evidence="2">N-glycosylated.</text>
</comment>
<comment type="similarity">
    <text evidence="6">Belongs to the MHC class I family.</text>
</comment>
<organism>
    <name type="scientific">Pongo pygmaeus</name>
    <name type="common">Bornean orangutan</name>
    <dbReference type="NCBI Taxonomy" id="9600"/>
    <lineage>
        <taxon>Eukaryota</taxon>
        <taxon>Metazoa</taxon>
        <taxon>Chordata</taxon>
        <taxon>Craniata</taxon>
        <taxon>Vertebrata</taxon>
        <taxon>Euteleostomi</taxon>
        <taxon>Mammalia</taxon>
        <taxon>Eutheria</taxon>
        <taxon>Euarchontoglires</taxon>
        <taxon>Primates</taxon>
        <taxon>Haplorrhini</taxon>
        <taxon>Catarrhini</taxon>
        <taxon>Hominidae</taxon>
        <taxon>Pongo</taxon>
    </lineage>
</organism>
<reference key="1">
    <citation type="journal article" date="2001" name="Immunogenetics">
        <title>Characterization of the MHC class I-related MR1 locus in nonhuman primates.</title>
        <authorList>
            <person name="Parra-Cuadrado J.F."/>
            <person name="del Moral M.G."/>
            <person name="Garcia-Pavia P."/>
            <person name="Setien F."/>
            <person name="Martinez-Naves E."/>
        </authorList>
    </citation>
    <scope>NUCLEOTIDE SEQUENCE [GENOMIC DNA / MRNA] (ISOFORMS 1 AND 2)</scope>
    <scope>ALTERNATIVE SPLICING</scope>
</reference>
<gene>
    <name evidence="5" type="primary">MR1</name>
</gene>